<accession>Q39JW3</accession>
<feature type="chain" id="PRO_0000253654" description="UDP-3-O-acyl-N-acetylglucosamine deacetylase">
    <location>
        <begin position="1"/>
        <end position="305"/>
    </location>
</feature>
<feature type="active site" description="Proton donor" evidence="1">
    <location>
        <position position="264"/>
    </location>
</feature>
<feature type="binding site" evidence="1">
    <location>
        <position position="78"/>
    </location>
    <ligand>
        <name>Zn(2+)</name>
        <dbReference type="ChEBI" id="CHEBI:29105"/>
    </ligand>
</feature>
<feature type="binding site" evidence="1">
    <location>
        <position position="237"/>
    </location>
    <ligand>
        <name>Zn(2+)</name>
        <dbReference type="ChEBI" id="CHEBI:29105"/>
    </ligand>
</feature>
<feature type="binding site" evidence="1">
    <location>
        <position position="241"/>
    </location>
    <ligand>
        <name>Zn(2+)</name>
        <dbReference type="ChEBI" id="CHEBI:29105"/>
    </ligand>
</feature>
<proteinExistence type="inferred from homology"/>
<keyword id="KW-0378">Hydrolase</keyword>
<keyword id="KW-0441">Lipid A biosynthesis</keyword>
<keyword id="KW-0444">Lipid biosynthesis</keyword>
<keyword id="KW-0443">Lipid metabolism</keyword>
<keyword id="KW-0479">Metal-binding</keyword>
<keyword id="KW-0862">Zinc</keyword>
<organism>
    <name type="scientific">Burkholderia lata (strain ATCC 17760 / DSM 23089 / LMG 22485 / NCIMB 9086 / R18194 / 383)</name>
    <dbReference type="NCBI Taxonomy" id="482957"/>
    <lineage>
        <taxon>Bacteria</taxon>
        <taxon>Pseudomonadati</taxon>
        <taxon>Pseudomonadota</taxon>
        <taxon>Betaproteobacteria</taxon>
        <taxon>Burkholderiales</taxon>
        <taxon>Burkholderiaceae</taxon>
        <taxon>Burkholderia</taxon>
        <taxon>Burkholderia cepacia complex</taxon>
    </lineage>
</organism>
<dbReference type="EC" id="3.5.1.108" evidence="1"/>
<dbReference type="EMBL" id="CP000151">
    <property type="protein sequence ID" value="ABB07253.1"/>
    <property type="molecule type" value="Genomic_DNA"/>
</dbReference>
<dbReference type="RefSeq" id="WP_011350845.1">
    <property type="nucleotide sequence ID" value="NZ_WNDV01000054.1"/>
</dbReference>
<dbReference type="SMR" id="Q39JW3"/>
<dbReference type="GeneID" id="45093566"/>
<dbReference type="KEGG" id="bur:Bcep18194_A3652"/>
<dbReference type="HOGENOM" id="CLU_046528_1_0_4"/>
<dbReference type="UniPathway" id="UPA00359">
    <property type="reaction ID" value="UER00478"/>
</dbReference>
<dbReference type="Proteomes" id="UP000002705">
    <property type="component" value="Chromosome 1"/>
</dbReference>
<dbReference type="GO" id="GO:0016020">
    <property type="term" value="C:membrane"/>
    <property type="evidence" value="ECO:0007669"/>
    <property type="project" value="GOC"/>
</dbReference>
<dbReference type="GO" id="GO:0046872">
    <property type="term" value="F:metal ion binding"/>
    <property type="evidence" value="ECO:0007669"/>
    <property type="project" value="UniProtKB-KW"/>
</dbReference>
<dbReference type="GO" id="GO:0103117">
    <property type="term" value="F:UDP-3-O-acyl-N-acetylglucosamine deacetylase activity"/>
    <property type="evidence" value="ECO:0007669"/>
    <property type="project" value="UniProtKB-UniRule"/>
</dbReference>
<dbReference type="GO" id="GO:0009245">
    <property type="term" value="P:lipid A biosynthetic process"/>
    <property type="evidence" value="ECO:0007669"/>
    <property type="project" value="UniProtKB-UniRule"/>
</dbReference>
<dbReference type="Gene3D" id="3.30.230.20">
    <property type="entry name" value="lpxc deacetylase, domain 1"/>
    <property type="match status" value="1"/>
</dbReference>
<dbReference type="Gene3D" id="3.30.1700.10">
    <property type="entry name" value="lpxc deacetylase, domain 2"/>
    <property type="match status" value="1"/>
</dbReference>
<dbReference type="HAMAP" id="MF_00388">
    <property type="entry name" value="LpxC"/>
    <property type="match status" value="1"/>
</dbReference>
<dbReference type="InterPro" id="IPR020568">
    <property type="entry name" value="Ribosomal_Su5_D2-typ_SF"/>
</dbReference>
<dbReference type="InterPro" id="IPR004463">
    <property type="entry name" value="UDP-acyl_GlcNac_deAcase"/>
</dbReference>
<dbReference type="InterPro" id="IPR011334">
    <property type="entry name" value="UDP-acyl_GlcNac_deAcase_C"/>
</dbReference>
<dbReference type="InterPro" id="IPR015870">
    <property type="entry name" value="UDP-acyl_N-AcGlcN_deAcase_N"/>
</dbReference>
<dbReference type="NCBIfam" id="TIGR00325">
    <property type="entry name" value="lpxC"/>
    <property type="match status" value="1"/>
</dbReference>
<dbReference type="PANTHER" id="PTHR33694">
    <property type="entry name" value="UDP-3-O-ACYL-N-ACETYLGLUCOSAMINE DEACETYLASE 1, MITOCHONDRIAL-RELATED"/>
    <property type="match status" value="1"/>
</dbReference>
<dbReference type="PANTHER" id="PTHR33694:SF1">
    <property type="entry name" value="UDP-3-O-ACYL-N-ACETYLGLUCOSAMINE DEACETYLASE 1, MITOCHONDRIAL-RELATED"/>
    <property type="match status" value="1"/>
</dbReference>
<dbReference type="Pfam" id="PF03331">
    <property type="entry name" value="LpxC"/>
    <property type="match status" value="1"/>
</dbReference>
<dbReference type="SUPFAM" id="SSF54211">
    <property type="entry name" value="Ribosomal protein S5 domain 2-like"/>
    <property type="match status" value="2"/>
</dbReference>
<comment type="function">
    <text evidence="1">Catalyzes the hydrolysis of UDP-3-O-myristoyl-N-acetylglucosamine to form UDP-3-O-myristoylglucosamine and acetate, the committed step in lipid A biosynthesis.</text>
</comment>
<comment type="catalytic activity">
    <reaction evidence="1">
        <text>a UDP-3-O-[(3R)-3-hydroxyacyl]-N-acetyl-alpha-D-glucosamine + H2O = a UDP-3-O-[(3R)-3-hydroxyacyl]-alpha-D-glucosamine + acetate</text>
        <dbReference type="Rhea" id="RHEA:67816"/>
        <dbReference type="ChEBI" id="CHEBI:15377"/>
        <dbReference type="ChEBI" id="CHEBI:30089"/>
        <dbReference type="ChEBI" id="CHEBI:137740"/>
        <dbReference type="ChEBI" id="CHEBI:173225"/>
        <dbReference type="EC" id="3.5.1.108"/>
    </reaction>
</comment>
<comment type="cofactor">
    <cofactor evidence="1">
        <name>Zn(2+)</name>
        <dbReference type="ChEBI" id="CHEBI:29105"/>
    </cofactor>
</comment>
<comment type="pathway">
    <text evidence="1">Glycolipid biosynthesis; lipid IV(A) biosynthesis; lipid IV(A) from (3R)-3-hydroxytetradecanoyl-[acyl-carrier-protein] and UDP-N-acetyl-alpha-D-glucosamine: step 2/6.</text>
</comment>
<comment type="similarity">
    <text evidence="1">Belongs to the LpxC family.</text>
</comment>
<sequence length="305" mass="33532">MLKQRTIKSIVKTVGIGVHSGRKIELTLRPAAPGTGIVFSRVDLPTPVDIPAAATSIGDTRLASVLQKDGVRVSTVEHLMSACAGLGIDNLYVDVTAEEIPIMDGSAATFVFLIQSAGIEEQNAPKRFVKVKKTVEIRDGDKFARLDPYFGFKLKFSIDFRHPAVDKTGQELEVDFANTSYVREIARARTFGFAHEAEMLREMGLARGGSMENAIVLDEYRILNNDGLRYDDEFVKHKMLDAIGDLYVIGHPLLASYTAYKSGHGLNNALLRELLANEDAYEIVTFDDPQAAPKGFAFDMQTAFA</sequence>
<protein>
    <recommendedName>
        <fullName evidence="1">UDP-3-O-acyl-N-acetylglucosamine deacetylase</fullName>
        <shortName evidence="1">UDP-3-O-acyl-GlcNAc deacetylase</shortName>
        <ecNumber evidence="1">3.5.1.108</ecNumber>
    </recommendedName>
    <alternativeName>
        <fullName evidence="1">UDP-3-O-[R-3-hydroxymyristoyl]-N-acetylglucosamine deacetylase</fullName>
    </alternativeName>
</protein>
<gene>
    <name evidence="1" type="primary">lpxC</name>
    <name type="ordered locus">Bcep18194_A3652</name>
</gene>
<name>LPXC_BURL3</name>
<evidence type="ECO:0000255" key="1">
    <source>
        <dbReference type="HAMAP-Rule" id="MF_00388"/>
    </source>
</evidence>
<reference key="1">
    <citation type="submission" date="2005-10" db="EMBL/GenBank/DDBJ databases">
        <title>Complete sequence of chromosome 1 of Burkholderia sp. 383.</title>
        <authorList>
            <consortium name="US DOE Joint Genome Institute"/>
            <person name="Copeland A."/>
            <person name="Lucas S."/>
            <person name="Lapidus A."/>
            <person name="Barry K."/>
            <person name="Detter J.C."/>
            <person name="Glavina T."/>
            <person name="Hammon N."/>
            <person name="Israni S."/>
            <person name="Pitluck S."/>
            <person name="Chain P."/>
            <person name="Malfatti S."/>
            <person name="Shin M."/>
            <person name="Vergez L."/>
            <person name="Schmutz J."/>
            <person name="Larimer F."/>
            <person name="Land M."/>
            <person name="Kyrpides N."/>
            <person name="Lykidis A."/>
            <person name="Richardson P."/>
        </authorList>
    </citation>
    <scope>NUCLEOTIDE SEQUENCE [LARGE SCALE GENOMIC DNA]</scope>
    <source>
        <strain>ATCC 17760 / DSM 23089 / LMG 22485 / NCIMB 9086 / R18194 / 383</strain>
    </source>
</reference>